<protein>
    <recommendedName>
        <fullName evidence="1">Nicotinate-nucleotide--dimethylbenzimidazole phosphoribosyltransferase</fullName>
        <shortName evidence="1">NN:DBI PRT</shortName>
        <ecNumber evidence="1">2.4.2.21</ecNumber>
    </recommendedName>
    <alternativeName>
        <fullName evidence="1">N(1)-alpha-phosphoribosyltransferase</fullName>
    </alternativeName>
</protein>
<dbReference type="EC" id="2.4.2.21" evidence="1"/>
<dbReference type="EMBL" id="BX571869">
    <property type="protein sequence ID" value="CAE15354.1"/>
    <property type="molecule type" value="Genomic_DNA"/>
</dbReference>
<dbReference type="RefSeq" id="WP_011147199.1">
    <property type="nucleotide sequence ID" value="NC_005126.1"/>
</dbReference>
<dbReference type="SMR" id="Q7N2U4"/>
<dbReference type="STRING" id="243265.plu2980"/>
<dbReference type="GeneID" id="48849240"/>
<dbReference type="KEGG" id="plu:plu2980"/>
<dbReference type="eggNOG" id="COG2038">
    <property type="taxonomic scope" value="Bacteria"/>
</dbReference>
<dbReference type="HOGENOM" id="CLU_002982_0_0_6"/>
<dbReference type="OrthoDB" id="9781491at2"/>
<dbReference type="UniPathway" id="UPA00061">
    <property type="reaction ID" value="UER00516"/>
</dbReference>
<dbReference type="Proteomes" id="UP000002514">
    <property type="component" value="Chromosome"/>
</dbReference>
<dbReference type="GO" id="GO:0008939">
    <property type="term" value="F:nicotinate-nucleotide-dimethylbenzimidazole phosphoribosyltransferase activity"/>
    <property type="evidence" value="ECO:0007669"/>
    <property type="project" value="UniProtKB-UniRule"/>
</dbReference>
<dbReference type="GO" id="GO:0009236">
    <property type="term" value="P:cobalamin biosynthetic process"/>
    <property type="evidence" value="ECO:0007669"/>
    <property type="project" value="UniProtKB-KW"/>
</dbReference>
<dbReference type="CDD" id="cd02439">
    <property type="entry name" value="DMB-PRT_CobT"/>
    <property type="match status" value="1"/>
</dbReference>
<dbReference type="FunFam" id="3.40.50.10210:FF:000001">
    <property type="entry name" value="Nicotinate-nucleotide--dimethylbenzimidazole phosphoribosyltransferase"/>
    <property type="match status" value="1"/>
</dbReference>
<dbReference type="Gene3D" id="1.10.1610.10">
    <property type="match status" value="2"/>
</dbReference>
<dbReference type="Gene3D" id="3.40.50.10210">
    <property type="match status" value="1"/>
</dbReference>
<dbReference type="HAMAP" id="MF_00230">
    <property type="entry name" value="CobT"/>
    <property type="match status" value="1"/>
</dbReference>
<dbReference type="InterPro" id="IPR003200">
    <property type="entry name" value="Nict_dMeBzImd_PRibTrfase"/>
</dbReference>
<dbReference type="InterPro" id="IPR017846">
    <property type="entry name" value="Nict_dMeBzImd_PRibTrfase_bact"/>
</dbReference>
<dbReference type="InterPro" id="IPR023195">
    <property type="entry name" value="Nict_dMeBzImd_PRibTrfase_N"/>
</dbReference>
<dbReference type="InterPro" id="IPR036087">
    <property type="entry name" value="Nict_dMeBzImd_PRibTrfase_sf"/>
</dbReference>
<dbReference type="NCBIfam" id="TIGR03160">
    <property type="entry name" value="cobT_DBIPRT"/>
    <property type="match status" value="1"/>
</dbReference>
<dbReference type="NCBIfam" id="NF000996">
    <property type="entry name" value="PRK00105.1"/>
    <property type="match status" value="1"/>
</dbReference>
<dbReference type="PANTHER" id="PTHR43463">
    <property type="entry name" value="NICOTINATE-NUCLEOTIDE--DIMETHYLBENZIMIDAZOLE PHOSPHORIBOSYLTRANSFERASE"/>
    <property type="match status" value="1"/>
</dbReference>
<dbReference type="PANTHER" id="PTHR43463:SF1">
    <property type="entry name" value="NICOTINATE-NUCLEOTIDE--DIMETHYLBENZIMIDAZOLE PHOSPHORIBOSYLTRANSFERASE"/>
    <property type="match status" value="1"/>
</dbReference>
<dbReference type="Pfam" id="PF02277">
    <property type="entry name" value="DBI_PRT"/>
    <property type="match status" value="1"/>
</dbReference>
<dbReference type="SUPFAM" id="SSF52733">
    <property type="entry name" value="Nicotinate mononucleotide:5,6-dimethylbenzimidazole phosphoribosyltransferase (CobT)"/>
    <property type="match status" value="1"/>
</dbReference>
<sequence>MQTLSSIINAIVPLDNVAMARTATRLNGLVKPTGSFGRLEHLAIQLAGMRGLSGHHIDRKQIIVMVADHGVYDEGVTISPKSATAIHAQNMMKGITGVCVLAENAGADVKVVDVGIDSDPVPGLVNMKVERGSGNIAQGPAMSRQQAEDLLLASACLTLEQITNGVQLFGVGELGMANTTPAAAVVSVFTDNDPQQIVGIGANFPSERLHHKVAVVRQAIEINRPDARDSIDVLAKVGGYDLVGMAGVMLGAASVGLPVILDGFPSYAAALAACRIAPDVRHYLIPSHLSAEKGSIIALQHLQLAPYLHLDMRLGEGSGAALAMHLVDAACAMYNNMGLLAESNIVLPF</sequence>
<evidence type="ECO:0000255" key="1">
    <source>
        <dbReference type="HAMAP-Rule" id="MF_00230"/>
    </source>
</evidence>
<accession>Q7N2U4</accession>
<reference key="1">
    <citation type="journal article" date="2003" name="Nat. Biotechnol.">
        <title>The genome sequence of the entomopathogenic bacterium Photorhabdus luminescens.</title>
        <authorList>
            <person name="Duchaud E."/>
            <person name="Rusniok C."/>
            <person name="Frangeul L."/>
            <person name="Buchrieser C."/>
            <person name="Givaudan A."/>
            <person name="Taourit S."/>
            <person name="Bocs S."/>
            <person name="Boursaux-Eude C."/>
            <person name="Chandler M."/>
            <person name="Charles J.-F."/>
            <person name="Dassa E."/>
            <person name="Derose R."/>
            <person name="Derzelle S."/>
            <person name="Freyssinet G."/>
            <person name="Gaudriault S."/>
            <person name="Medigue C."/>
            <person name="Lanois A."/>
            <person name="Powell K."/>
            <person name="Siguier P."/>
            <person name="Vincent R."/>
            <person name="Wingate V."/>
            <person name="Zouine M."/>
            <person name="Glaser P."/>
            <person name="Boemare N."/>
            <person name="Danchin A."/>
            <person name="Kunst F."/>
        </authorList>
    </citation>
    <scope>NUCLEOTIDE SEQUENCE [LARGE SCALE GENOMIC DNA]</scope>
    <source>
        <strain>DSM 15139 / CIP 105565 / TT01</strain>
    </source>
</reference>
<feature type="chain" id="PRO_0000167058" description="Nicotinate-nucleotide--dimethylbenzimidazole phosphoribosyltransferase">
    <location>
        <begin position="1"/>
        <end position="349"/>
    </location>
</feature>
<feature type="active site" description="Proton acceptor" evidence="1">
    <location>
        <position position="316"/>
    </location>
</feature>
<organism>
    <name type="scientific">Photorhabdus laumondii subsp. laumondii (strain DSM 15139 / CIP 105565 / TT01)</name>
    <name type="common">Photorhabdus luminescens subsp. laumondii</name>
    <dbReference type="NCBI Taxonomy" id="243265"/>
    <lineage>
        <taxon>Bacteria</taxon>
        <taxon>Pseudomonadati</taxon>
        <taxon>Pseudomonadota</taxon>
        <taxon>Gammaproteobacteria</taxon>
        <taxon>Enterobacterales</taxon>
        <taxon>Morganellaceae</taxon>
        <taxon>Photorhabdus</taxon>
    </lineage>
</organism>
<comment type="function">
    <text evidence="1">Catalyzes the synthesis of alpha-ribazole-5'-phosphate from nicotinate mononucleotide (NAMN) and 5,6-dimethylbenzimidazole (DMB).</text>
</comment>
<comment type="catalytic activity">
    <reaction evidence="1">
        <text>5,6-dimethylbenzimidazole + nicotinate beta-D-ribonucleotide = alpha-ribazole 5'-phosphate + nicotinate + H(+)</text>
        <dbReference type="Rhea" id="RHEA:11196"/>
        <dbReference type="ChEBI" id="CHEBI:15378"/>
        <dbReference type="ChEBI" id="CHEBI:15890"/>
        <dbReference type="ChEBI" id="CHEBI:32544"/>
        <dbReference type="ChEBI" id="CHEBI:57502"/>
        <dbReference type="ChEBI" id="CHEBI:57918"/>
        <dbReference type="EC" id="2.4.2.21"/>
    </reaction>
</comment>
<comment type="pathway">
    <text evidence="1">Nucleoside biosynthesis; alpha-ribazole biosynthesis; alpha-ribazole from 5,6-dimethylbenzimidazole: step 1/2.</text>
</comment>
<comment type="similarity">
    <text evidence="1">Belongs to the CobT family.</text>
</comment>
<name>COBT_PHOLL</name>
<gene>
    <name evidence="1" type="primary">cobT</name>
    <name type="ordered locus">plu2980</name>
</gene>
<proteinExistence type="inferred from homology"/>
<keyword id="KW-0169">Cobalamin biosynthesis</keyword>
<keyword id="KW-0328">Glycosyltransferase</keyword>
<keyword id="KW-1185">Reference proteome</keyword>
<keyword id="KW-0808">Transferase</keyword>